<keyword id="KW-0028">Amino-acid biosynthesis</keyword>
<keyword id="KW-0963">Cytoplasm</keyword>
<keyword id="KW-0220">Diaminopimelate biosynthesis</keyword>
<keyword id="KW-0456">Lyase</keyword>
<keyword id="KW-0457">Lysine biosynthesis</keyword>
<keyword id="KW-0704">Schiff base</keyword>
<evidence type="ECO:0000255" key="1">
    <source>
        <dbReference type="HAMAP-Rule" id="MF_00418"/>
    </source>
</evidence>
<evidence type="ECO:0000305" key="2"/>
<name>DAPA_MOOTA</name>
<dbReference type="EC" id="4.3.3.7" evidence="1"/>
<dbReference type="EMBL" id="CP000232">
    <property type="protein sequence ID" value="ABC19382.1"/>
    <property type="molecule type" value="Genomic_DNA"/>
</dbReference>
<dbReference type="RefSeq" id="YP_429925.1">
    <property type="nucleotide sequence ID" value="NC_007644.1"/>
</dbReference>
<dbReference type="SMR" id="Q2RJK7"/>
<dbReference type="STRING" id="264732.Moth_1068"/>
<dbReference type="EnsemblBacteria" id="ABC19382">
    <property type="protein sequence ID" value="ABC19382"/>
    <property type="gene ID" value="Moth_1068"/>
</dbReference>
<dbReference type="KEGG" id="mta:Moth_1068"/>
<dbReference type="PATRIC" id="fig|264732.11.peg.1149"/>
<dbReference type="eggNOG" id="COG0329">
    <property type="taxonomic scope" value="Bacteria"/>
</dbReference>
<dbReference type="HOGENOM" id="CLU_049343_7_1_9"/>
<dbReference type="OrthoDB" id="9782828at2"/>
<dbReference type="UniPathway" id="UPA00034">
    <property type="reaction ID" value="UER00017"/>
</dbReference>
<dbReference type="GO" id="GO:0005829">
    <property type="term" value="C:cytosol"/>
    <property type="evidence" value="ECO:0007669"/>
    <property type="project" value="TreeGrafter"/>
</dbReference>
<dbReference type="GO" id="GO:0008840">
    <property type="term" value="F:4-hydroxy-tetrahydrodipicolinate synthase activity"/>
    <property type="evidence" value="ECO:0007669"/>
    <property type="project" value="UniProtKB-UniRule"/>
</dbReference>
<dbReference type="GO" id="GO:0019877">
    <property type="term" value="P:diaminopimelate biosynthetic process"/>
    <property type="evidence" value="ECO:0007669"/>
    <property type="project" value="UniProtKB-UniRule"/>
</dbReference>
<dbReference type="GO" id="GO:0009089">
    <property type="term" value="P:lysine biosynthetic process via diaminopimelate"/>
    <property type="evidence" value="ECO:0007669"/>
    <property type="project" value="UniProtKB-UniRule"/>
</dbReference>
<dbReference type="CDD" id="cd00950">
    <property type="entry name" value="DHDPS"/>
    <property type="match status" value="1"/>
</dbReference>
<dbReference type="Gene3D" id="3.20.20.70">
    <property type="entry name" value="Aldolase class I"/>
    <property type="match status" value="1"/>
</dbReference>
<dbReference type="HAMAP" id="MF_00418">
    <property type="entry name" value="DapA"/>
    <property type="match status" value="1"/>
</dbReference>
<dbReference type="InterPro" id="IPR013785">
    <property type="entry name" value="Aldolase_TIM"/>
</dbReference>
<dbReference type="InterPro" id="IPR005263">
    <property type="entry name" value="DapA"/>
</dbReference>
<dbReference type="InterPro" id="IPR002220">
    <property type="entry name" value="DapA-like"/>
</dbReference>
<dbReference type="InterPro" id="IPR020625">
    <property type="entry name" value="Schiff_base-form_aldolases_AS"/>
</dbReference>
<dbReference type="InterPro" id="IPR020624">
    <property type="entry name" value="Schiff_base-form_aldolases_CS"/>
</dbReference>
<dbReference type="NCBIfam" id="TIGR00674">
    <property type="entry name" value="dapA"/>
    <property type="match status" value="1"/>
</dbReference>
<dbReference type="PANTHER" id="PTHR12128:SF66">
    <property type="entry name" value="4-HYDROXY-2-OXOGLUTARATE ALDOLASE, MITOCHONDRIAL"/>
    <property type="match status" value="1"/>
</dbReference>
<dbReference type="PANTHER" id="PTHR12128">
    <property type="entry name" value="DIHYDRODIPICOLINATE SYNTHASE"/>
    <property type="match status" value="1"/>
</dbReference>
<dbReference type="Pfam" id="PF00701">
    <property type="entry name" value="DHDPS"/>
    <property type="match status" value="1"/>
</dbReference>
<dbReference type="PIRSF" id="PIRSF001365">
    <property type="entry name" value="DHDPS"/>
    <property type="match status" value="1"/>
</dbReference>
<dbReference type="PRINTS" id="PR00146">
    <property type="entry name" value="DHPICSNTHASE"/>
</dbReference>
<dbReference type="SMART" id="SM01130">
    <property type="entry name" value="DHDPS"/>
    <property type="match status" value="1"/>
</dbReference>
<dbReference type="SUPFAM" id="SSF51569">
    <property type="entry name" value="Aldolase"/>
    <property type="match status" value="1"/>
</dbReference>
<dbReference type="PROSITE" id="PS00665">
    <property type="entry name" value="DHDPS_1"/>
    <property type="match status" value="1"/>
</dbReference>
<dbReference type="PROSITE" id="PS00666">
    <property type="entry name" value="DHDPS_2"/>
    <property type="match status" value="1"/>
</dbReference>
<comment type="function">
    <text evidence="1">Catalyzes the condensation of (S)-aspartate-beta-semialdehyde [(S)-ASA] and pyruvate to 4-hydroxy-tetrahydrodipicolinate (HTPA).</text>
</comment>
<comment type="catalytic activity">
    <reaction evidence="1">
        <text>L-aspartate 4-semialdehyde + pyruvate = (2S,4S)-4-hydroxy-2,3,4,5-tetrahydrodipicolinate + H2O + H(+)</text>
        <dbReference type="Rhea" id="RHEA:34171"/>
        <dbReference type="ChEBI" id="CHEBI:15361"/>
        <dbReference type="ChEBI" id="CHEBI:15377"/>
        <dbReference type="ChEBI" id="CHEBI:15378"/>
        <dbReference type="ChEBI" id="CHEBI:67139"/>
        <dbReference type="ChEBI" id="CHEBI:537519"/>
        <dbReference type="EC" id="4.3.3.7"/>
    </reaction>
</comment>
<comment type="pathway">
    <text evidence="1">Amino-acid biosynthesis; L-lysine biosynthesis via DAP pathway; (S)-tetrahydrodipicolinate from L-aspartate: step 3/4.</text>
</comment>
<comment type="subunit">
    <text evidence="1">Homotetramer; dimer of dimers.</text>
</comment>
<comment type="subcellular location">
    <subcellularLocation>
        <location evidence="1">Cytoplasm</location>
    </subcellularLocation>
</comment>
<comment type="similarity">
    <text evidence="1">Belongs to the DapA family.</text>
</comment>
<comment type="caution">
    <text evidence="2">Was originally thought to be a dihydrodipicolinate synthase (DHDPS), catalyzing the condensation of (S)-aspartate-beta-semialdehyde [(S)-ASA] and pyruvate to dihydrodipicolinate (DHDP). However, it was shown in E.coli that the product of the enzymatic reaction is not dihydrodipicolinate but in fact (4S)-4-hydroxy-2,3,4,5-tetrahydro-(2S)-dipicolinic acid (HTPA), and that the consecutive dehydration reaction leading to DHDP is not spontaneous but catalyzed by DapB.</text>
</comment>
<reference key="1">
    <citation type="journal article" date="2008" name="Environ. Microbiol.">
        <title>The complete genome sequence of Moorella thermoacetica (f. Clostridium thermoaceticum).</title>
        <authorList>
            <person name="Pierce E."/>
            <person name="Xie G."/>
            <person name="Barabote R.D."/>
            <person name="Saunders E."/>
            <person name="Han C.S."/>
            <person name="Detter J.C."/>
            <person name="Richardson P."/>
            <person name="Brettin T.S."/>
            <person name="Das A."/>
            <person name="Ljungdahl L.G."/>
            <person name="Ragsdale S.W."/>
        </authorList>
    </citation>
    <scope>NUCLEOTIDE SEQUENCE [LARGE SCALE GENOMIC DNA]</scope>
    <source>
        <strain>ATCC 39073 / JCM 9320</strain>
    </source>
</reference>
<accession>Q2RJK7</accession>
<organism>
    <name type="scientific">Moorella thermoacetica (strain ATCC 39073 / JCM 9320)</name>
    <dbReference type="NCBI Taxonomy" id="264732"/>
    <lineage>
        <taxon>Bacteria</taxon>
        <taxon>Bacillati</taxon>
        <taxon>Bacillota</taxon>
        <taxon>Clostridia</taxon>
        <taxon>Moorellales</taxon>
        <taxon>Moorellaceae</taxon>
        <taxon>Moorella</taxon>
    </lineage>
</organism>
<protein>
    <recommendedName>
        <fullName evidence="1">4-hydroxy-tetrahydrodipicolinate synthase</fullName>
        <shortName evidence="1">HTPA synthase</shortName>
        <ecNumber evidence="1">4.3.3.7</ecNumber>
    </recommendedName>
</protein>
<sequence>MQWGRILTAMVTPFTADGKLDLDGARRLAAYLVDHGSDGLVVAGTTGESPTLTHEEKIALFREVKKAVGDRAAVIAGTGTNSTAASIELSREAEALGVDGLMLVVPYYNRPSQEGLYQHFKAIAAATTLPIILYNIPSRTGRNMDAATTLRLAEIKNIKAVKEASGDLDQATAILRQAPADFLVYSGDDSLTLPLMAVGGYGIISVVAHVAGEKMQAMVRAFTAGDVQGAAALHRELFPLFKALFITSNPVPVKEALQMLGLPAGPVRLPLVGATREEKEKIAAALKETGLL</sequence>
<proteinExistence type="inferred from homology"/>
<feature type="chain" id="PRO_0000340970" description="4-hydroxy-tetrahydrodipicolinate synthase">
    <location>
        <begin position="1"/>
        <end position="292"/>
    </location>
</feature>
<feature type="active site" description="Proton donor/acceptor" evidence="1">
    <location>
        <position position="134"/>
    </location>
</feature>
<feature type="active site" description="Schiff-base intermediate with substrate" evidence="1">
    <location>
        <position position="162"/>
    </location>
</feature>
<feature type="binding site" evidence="1">
    <location>
        <position position="46"/>
    </location>
    <ligand>
        <name>pyruvate</name>
        <dbReference type="ChEBI" id="CHEBI:15361"/>
    </ligand>
</feature>
<feature type="binding site" evidence="1">
    <location>
        <position position="204"/>
    </location>
    <ligand>
        <name>pyruvate</name>
        <dbReference type="ChEBI" id="CHEBI:15361"/>
    </ligand>
</feature>
<feature type="site" description="Part of a proton relay during catalysis" evidence="1">
    <location>
        <position position="45"/>
    </location>
</feature>
<feature type="site" description="Part of a proton relay during catalysis" evidence="1">
    <location>
        <position position="108"/>
    </location>
</feature>
<gene>
    <name evidence="1" type="primary">dapA</name>
    <name type="ordered locus">Moth_1068</name>
</gene>